<protein>
    <recommendedName>
        <fullName>Phycocyanobilin lyase subunit beta</fullName>
        <ecNumber>4.-.-.-</ecNumber>
    </recommendedName>
    <alternativeName>
        <fullName>Phycocyanin operon protein CpcF</fullName>
    </alternativeName>
</protein>
<evidence type="ECO:0000250" key="1"/>
<evidence type="ECO:0000305" key="2"/>
<accession>P50038</accession>
<keyword id="KW-0042">Antenna complex</keyword>
<keyword id="KW-0456">Lyase</keyword>
<keyword id="KW-0605">Phycobilisome</keyword>
<keyword id="KW-1185">Reference proteome</keyword>
<organism>
    <name type="scientific">Thermosynechococcus vestitus (strain NIES-2133 / IAM M-273 / BP-1)</name>
    <dbReference type="NCBI Taxonomy" id="197221"/>
    <lineage>
        <taxon>Bacteria</taxon>
        <taxon>Bacillati</taxon>
        <taxon>Cyanobacteriota</taxon>
        <taxon>Cyanophyceae</taxon>
        <taxon>Acaryochloridales</taxon>
        <taxon>Thermosynechococcaceae</taxon>
        <taxon>Thermosynechococcus</taxon>
    </lineage>
</organism>
<comment type="function">
    <text evidence="1">Required for the chromophorylation of the CpcA gene product.</text>
</comment>
<comment type="subunit">
    <text evidence="1">CpcE and CpcF associate to form a lyase.</text>
</comment>
<comment type="similarity">
    <text evidence="2">Belongs to the CpcE/RpcE/PecE family.</text>
</comment>
<reference key="1">
    <citation type="submission" date="1992-09" db="EMBL/GenBank/DDBJ databases">
        <title>Cloning and sequencing of the phycocyanin operon from the thermophilic cyanobacterium Synechococcus elongatus.</title>
        <authorList>
            <person name="Shimazu T."/>
            <person name="Soga M."/>
            <person name="Hirano M."/>
            <person name="Katoh S."/>
        </authorList>
    </citation>
    <scope>NUCLEOTIDE SEQUENCE [GENOMIC DNA]</scope>
</reference>
<reference key="2">
    <citation type="journal article" date="2002" name="DNA Res.">
        <title>Complete genome structure of the thermophilic cyanobacterium Thermosynechococcus elongatus BP-1.</title>
        <authorList>
            <person name="Nakamura Y."/>
            <person name="Kaneko T."/>
            <person name="Sato S."/>
            <person name="Ikeuchi M."/>
            <person name="Katoh H."/>
            <person name="Sasamoto S."/>
            <person name="Watanabe A."/>
            <person name="Iriguchi M."/>
            <person name="Kawashima K."/>
            <person name="Kimura T."/>
            <person name="Kishida Y."/>
            <person name="Kiyokawa C."/>
            <person name="Kohara M."/>
            <person name="Matsumoto M."/>
            <person name="Matsuno A."/>
            <person name="Nakazaki N."/>
            <person name="Shimpo S."/>
            <person name="Sugimoto M."/>
            <person name="Takeuchi C."/>
            <person name="Yamada M."/>
            <person name="Tabata S."/>
        </authorList>
    </citation>
    <scope>NUCLEOTIDE SEQUENCE [LARGE SCALE GENOMIC DNA]</scope>
    <source>
        <strain>NIES-2133 / IAM M-273 / BP-1</strain>
    </source>
</reference>
<sequence>MSDLGAYIHAVETASSASALREAVIQLAQQNSTAAIPTLIAVLGYNNPAAAQAAVEGLIALGDAVVEPLLAQLDGYNYGARAYGVRVLGSIGHPAALQVLLAAAQSDFAPSVRRAATKALGTLRWQLIPEETVREAQLKEALAVLQRNSKAADWAVRYAVGVALDYLHQQAAARGIREAVRSLLNHLSDRDPDIVVRSRCQLALQRDSLSMHT</sequence>
<dbReference type="EC" id="4.-.-.-"/>
<dbReference type="EMBL" id="D13173">
    <property type="protein sequence ID" value="BAA02460.1"/>
    <property type="molecule type" value="Genomic_DNA"/>
</dbReference>
<dbReference type="EMBL" id="BA000039">
    <property type="protein sequence ID" value="BAC09514.1"/>
    <property type="molecule type" value="Genomic_DNA"/>
</dbReference>
<dbReference type="RefSeq" id="NP_682752.1">
    <property type="nucleotide sequence ID" value="NC_004113.1"/>
</dbReference>
<dbReference type="RefSeq" id="WP_011057797.1">
    <property type="nucleotide sequence ID" value="NC_004113.1"/>
</dbReference>
<dbReference type="SMR" id="P50038"/>
<dbReference type="STRING" id="197221.gene:10748569"/>
<dbReference type="EnsemblBacteria" id="BAC09514">
    <property type="protein sequence ID" value="BAC09514"/>
    <property type="gene ID" value="BAC09514"/>
</dbReference>
<dbReference type="KEGG" id="tel:tlr1962"/>
<dbReference type="PATRIC" id="fig|197221.4.peg.2052"/>
<dbReference type="eggNOG" id="COG1413">
    <property type="taxonomic scope" value="Bacteria"/>
</dbReference>
<dbReference type="Proteomes" id="UP000000440">
    <property type="component" value="Chromosome"/>
</dbReference>
<dbReference type="GO" id="GO:0030089">
    <property type="term" value="C:phycobilisome"/>
    <property type="evidence" value="ECO:0007669"/>
    <property type="project" value="UniProtKB-KW"/>
</dbReference>
<dbReference type="GO" id="GO:0019135">
    <property type="term" value="F:deoxyhypusine monooxygenase activity"/>
    <property type="evidence" value="ECO:0007669"/>
    <property type="project" value="TreeGrafter"/>
</dbReference>
<dbReference type="GO" id="GO:0016829">
    <property type="term" value="F:lyase activity"/>
    <property type="evidence" value="ECO:0007669"/>
    <property type="project" value="UniProtKB-KW"/>
</dbReference>
<dbReference type="Gene3D" id="1.25.10.10">
    <property type="entry name" value="Leucine-rich Repeat Variant"/>
    <property type="match status" value="1"/>
</dbReference>
<dbReference type="InterPro" id="IPR011989">
    <property type="entry name" value="ARM-like"/>
</dbReference>
<dbReference type="InterPro" id="IPR016024">
    <property type="entry name" value="ARM-type_fold"/>
</dbReference>
<dbReference type="InterPro" id="IPR004155">
    <property type="entry name" value="PBS_lyase_HEAT"/>
</dbReference>
<dbReference type="PANTHER" id="PTHR12697:SF20">
    <property type="entry name" value="HEAT REPEAT-CONTAINING PROTEIN 4"/>
    <property type="match status" value="1"/>
</dbReference>
<dbReference type="PANTHER" id="PTHR12697">
    <property type="entry name" value="PBS LYASE HEAT-LIKE PROTEIN"/>
    <property type="match status" value="1"/>
</dbReference>
<dbReference type="Pfam" id="PF13646">
    <property type="entry name" value="HEAT_2"/>
    <property type="match status" value="1"/>
</dbReference>
<dbReference type="Pfam" id="PF03130">
    <property type="entry name" value="HEAT_PBS"/>
    <property type="match status" value="1"/>
</dbReference>
<dbReference type="SUPFAM" id="SSF48371">
    <property type="entry name" value="ARM repeat"/>
    <property type="match status" value="1"/>
</dbReference>
<proteinExistence type="inferred from homology"/>
<feature type="chain" id="PRO_0000199279" description="Phycocyanobilin lyase subunit beta">
    <location>
        <begin position="1"/>
        <end position="213"/>
    </location>
</feature>
<gene>
    <name type="primary">cpcF</name>
    <name type="ordered locus">tlr1962</name>
</gene>
<name>CPCF_THEVB</name>